<protein>
    <recommendedName>
        <fullName evidence="2">Large ribosomal subunit protein bL27</fullName>
    </recommendedName>
    <alternativeName>
        <fullName evidence="3">50S ribosomal protein L27</fullName>
    </alternativeName>
</protein>
<organism>
    <name type="scientific">Onion yellows phytoplasma (strain OY-M)</name>
    <dbReference type="NCBI Taxonomy" id="262768"/>
    <lineage>
        <taxon>Bacteria</taxon>
        <taxon>Bacillati</taxon>
        <taxon>Mycoplasmatota</taxon>
        <taxon>Mollicutes</taxon>
        <taxon>Acholeplasmatales</taxon>
        <taxon>Acholeplasmataceae</taxon>
        <taxon>Candidatus Phytoplasma</taxon>
        <taxon>16SrI (Aster yellows group)</taxon>
    </lineage>
</organism>
<feature type="propeptide" id="PRO_0000459923" evidence="1">
    <location>
        <begin position="1"/>
        <end position="10"/>
    </location>
</feature>
<feature type="chain" id="PRO_0000181137" description="Large ribosomal subunit protein bL27">
    <location>
        <begin position="11"/>
        <end position="92"/>
    </location>
</feature>
<keyword id="KW-0687">Ribonucleoprotein</keyword>
<keyword id="KW-0689">Ribosomal protein</keyword>
<sequence length="92" mass="10103">MLLQLQIQLFASKKGAGSTRNGRDSHSKRLGAKLSDGQFAKAGAIIYRQRGTKIHPGFNVGRGGDDTLFAKMSGIIKFEKKHGRKKVSVYLQ</sequence>
<accession>Q6YRC7</accession>
<gene>
    <name evidence="2" type="primary">rpmA</name>
    <name type="ordered locus">PAM_088</name>
</gene>
<reference key="1">
    <citation type="journal article" date="2004" name="Nat. Genet.">
        <title>Reductive evolution suggested from the complete genome sequence of a plant-pathogenic phytoplasma.</title>
        <authorList>
            <person name="Oshima K."/>
            <person name="Kakizawa S."/>
            <person name="Nishigawa H."/>
            <person name="Jung H.-Y."/>
            <person name="Wei W."/>
            <person name="Suzuki S."/>
            <person name="Arashida R."/>
            <person name="Nakata D."/>
            <person name="Miyata S."/>
            <person name="Ugaki M."/>
            <person name="Namba S."/>
        </authorList>
    </citation>
    <scope>NUCLEOTIDE SEQUENCE [LARGE SCALE GENOMIC DNA]</scope>
    <source>
        <strain>OY-M</strain>
    </source>
</reference>
<dbReference type="EMBL" id="AP006628">
    <property type="protein sequence ID" value="BAD04173.1"/>
    <property type="molecule type" value="Genomic_DNA"/>
</dbReference>
<dbReference type="SMR" id="Q6YRC7"/>
<dbReference type="STRING" id="262768.PAM_088"/>
<dbReference type="KEGG" id="poy:PAM_088"/>
<dbReference type="eggNOG" id="COG0211">
    <property type="taxonomic scope" value="Bacteria"/>
</dbReference>
<dbReference type="HOGENOM" id="CLU_095424_4_0_14"/>
<dbReference type="BioCyc" id="OYEL262768:G1G26-117-MONOMER"/>
<dbReference type="Proteomes" id="UP000002523">
    <property type="component" value="Chromosome"/>
</dbReference>
<dbReference type="GO" id="GO:0022625">
    <property type="term" value="C:cytosolic large ribosomal subunit"/>
    <property type="evidence" value="ECO:0007669"/>
    <property type="project" value="TreeGrafter"/>
</dbReference>
<dbReference type="GO" id="GO:0003735">
    <property type="term" value="F:structural constituent of ribosome"/>
    <property type="evidence" value="ECO:0007669"/>
    <property type="project" value="InterPro"/>
</dbReference>
<dbReference type="GO" id="GO:0006412">
    <property type="term" value="P:translation"/>
    <property type="evidence" value="ECO:0007669"/>
    <property type="project" value="UniProtKB-UniRule"/>
</dbReference>
<dbReference type="FunFam" id="2.40.50.100:FF:000004">
    <property type="entry name" value="50S ribosomal protein L27"/>
    <property type="match status" value="1"/>
</dbReference>
<dbReference type="Gene3D" id="2.40.50.100">
    <property type="match status" value="1"/>
</dbReference>
<dbReference type="HAMAP" id="MF_00539">
    <property type="entry name" value="Ribosomal_bL27"/>
    <property type="match status" value="1"/>
</dbReference>
<dbReference type="InterPro" id="IPR001684">
    <property type="entry name" value="Ribosomal_bL27"/>
</dbReference>
<dbReference type="InterPro" id="IPR018261">
    <property type="entry name" value="Ribosomal_bL27_CS"/>
</dbReference>
<dbReference type="NCBIfam" id="TIGR00062">
    <property type="entry name" value="L27"/>
    <property type="match status" value="1"/>
</dbReference>
<dbReference type="PANTHER" id="PTHR15893:SF0">
    <property type="entry name" value="LARGE RIBOSOMAL SUBUNIT PROTEIN BL27M"/>
    <property type="match status" value="1"/>
</dbReference>
<dbReference type="PANTHER" id="PTHR15893">
    <property type="entry name" value="RIBOSOMAL PROTEIN L27"/>
    <property type="match status" value="1"/>
</dbReference>
<dbReference type="Pfam" id="PF01016">
    <property type="entry name" value="Ribosomal_L27"/>
    <property type="match status" value="1"/>
</dbReference>
<dbReference type="PRINTS" id="PR00063">
    <property type="entry name" value="RIBOSOMALL27"/>
</dbReference>
<dbReference type="SUPFAM" id="SSF110324">
    <property type="entry name" value="Ribosomal L27 protein-like"/>
    <property type="match status" value="1"/>
</dbReference>
<dbReference type="PROSITE" id="PS00831">
    <property type="entry name" value="RIBOSOMAL_L27"/>
    <property type="match status" value="1"/>
</dbReference>
<name>RL27_ONYPE</name>
<comment type="PTM">
    <text evidence="1">The N-terminus is cleaved by ribosomal processing cysteine protease Prp.</text>
</comment>
<comment type="similarity">
    <text evidence="2">Belongs to the bacterial ribosomal protein bL27 family.</text>
</comment>
<evidence type="ECO:0000250" key="1">
    <source>
        <dbReference type="UniProtKB" id="Q2FXT0"/>
    </source>
</evidence>
<evidence type="ECO:0000255" key="2">
    <source>
        <dbReference type="HAMAP-Rule" id="MF_00539"/>
    </source>
</evidence>
<evidence type="ECO:0000305" key="3"/>
<proteinExistence type="inferred from homology"/>